<gene>
    <name evidence="5" type="primary">aneD</name>
    <name type="ORF">ASPACDRAFT_60732</name>
</gene>
<protein>
    <recommendedName>
        <fullName evidence="5">Cytochrome P450 monooxygenase aneD</fullName>
        <ecNumber evidence="4">1.-.-.-</ecNumber>
    </recommendedName>
    <alternativeName>
        <fullName evidence="5">Aculenes biosynthesis cluster protein D</fullName>
    </alternativeName>
</protein>
<name>ANED_ASPA1</name>
<feature type="chain" id="PRO_0000449093" description="Cytochrome P450 monooxygenase aneD">
    <location>
        <begin position="1"/>
        <end position="514"/>
    </location>
</feature>
<feature type="transmembrane region" description="Helical" evidence="2">
    <location>
        <begin position="6"/>
        <end position="26"/>
    </location>
</feature>
<feature type="binding site" description="axial binding residue" evidence="1">
    <location>
        <position position="424"/>
    </location>
    <ligand>
        <name>heme</name>
        <dbReference type="ChEBI" id="CHEBI:30413"/>
    </ligand>
    <ligandPart>
        <name>Fe</name>
        <dbReference type="ChEBI" id="CHEBI:18248"/>
    </ligandPart>
</feature>
<feature type="glycosylation site" description="N-linked (GlcNAc...) asparagine" evidence="3">
    <location>
        <position position="113"/>
    </location>
</feature>
<feature type="glycosylation site" description="N-linked (GlcNAc...) asparagine" evidence="3">
    <location>
        <position position="261"/>
    </location>
</feature>
<feature type="glycosylation site" description="N-linked (GlcNAc...) asparagine" evidence="3">
    <location>
        <position position="347"/>
    </location>
</feature>
<sequence length="514" mass="57926">MMSAAICTLLAVIATTSLGLLFLSIIRRGKLPPGPPPKPIVGNLHQFPKVNRAQVFDQWHRTYGPIVGLRLGLKKLILVGSYQVARELLDRRGAIYSSRPRVVMAGEIANRGNHTALMPYGPKWKLHNRVHSALMNPTMVKRYQYLQDIESRQLVHDLLQGSTSDFGARIHRYSSSLLFALAYGRRLPTSDAFEIQENAHIAHQFINNLAAGRWLVDAFPVLNYLPTWLAPWKKIGEQLYQRKFGLLQRHTALALEKPVWNWTKHFHGPKKPAEASWEELLNIIGVLYEAGADTTTSALEAFVMAAVLHPDAVRRVQAEIDALVGGAARMPSFEDVQQLPFVDAFVNETMRWRPIAPEGVPHSLMKEDEYEGFTIPKNSIVIANQWHMAMDPATFTDPQAFRPERWLEDPKLPISAFGFGRRACPGRHIALNSMKIVMCRLLWAYDFDHAYENGRKVTIDPDNFVREGVLSKPAPFKAALRVRSPAHEKTIQSALRESEQDEDKILAHIAAGLA</sequence>
<reference key="1">
    <citation type="journal article" date="2017" name="Genome Biol.">
        <title>Comparative genomics reveals high biological diversity and specific adaptations in the industrially and medically important fungal genus Aspergillus.</title>
        <authorList>
            <person name="de Vries R.P."/>
            <person name="Riley R."/>
            <person name="Wiebenga A."/>
            <person name="Aguilar-Osorio G."/>
            <person name="Amillis S."/>
            <person name="Uchima C.A."/>
            <person name="Anderluh G."/>
            <person name="Asadollahi M."/>
            <person name="Askin M."/>
            <person name="Barry K."/>
            <person name="Battaglia E."/>
            <person name="Bayram O."/>
            <person name="Benocci T."/>
            <person name="Braus-Stromeyer S.A."/>
            <person name="Caldana C."/>
            <person name="Canovas D."/>
            <person name="Cerqueira G.C."/>
            <person name="Chen F."/>
            <person name="Chen W."/>
            <person name="Choi C."/>
            <person name="Clum A."/>
            <person name="Dos Santos R.A."/>
            <person name="Damasio A.R."/>
            <person name="Diallinas G."/>
            <person name="Emri T."/>
            <person name="Fekete E."/>
            <person name="Flipphi M."/>
            <person name="Freyberg S."/>
            <person name="Gallo A."/>
            <person name="Gournas C."/>
            <person name="Habgood R."/>
            <person name="Hainaut M."/>
            <person name="Harispe M.L."/>
            <person name="Henrissat B."/>
            <person name="Hilden K.S."/>
            <person name="Hope R."/>
            <person name="Hossain A."/>
            <person name="Karabika E."/>
            <person name="Karaffa L."/>
            <person name="Karanyi Z."/>
            <person name="Krasevec N."/>
            <person name="Kuo A."/>
            <person name="Kusch H."/>
            <person name="LaButti K."/>
            <person name="Lagendijk E.L."/>
            <person name="Lapidus A."/>
            <person name="Levasseur A."/>
            <person name="Lindquist E."/>
            <person name="Lipzen A."/>
            <person name="Logrieco A.F."/>
            <person name="MacCabe A."/>
            <person name="Maekelae M.R."/>
            <person name="Malavazi I."/>
            <person name="Melin P."/>
            <person name="Meyer V."/>
            <person name="Mielnichuk N."/>
            <person name="Miskei M."/>
            <person name="Molnar A.P."/>
            <person name="Mule G."/>
            <person name="Ngan C.Y."/>
            <person name="Orejas M."/>
            <person name="Orosz E."/>
            <person name="Ouedraogo J.P."/>
            <person name="Overkamp K.M."/>
            <person name="Park H.-S."/>
            <person name="Perrone G."/>
            <person name="Piumi F."/>
            <person name="Punt P.J."/>
            <person name="Ram A.F."/>
            <person name="Ramon A."/>
            <person name="Rauscher S."/>
            <person name="Record E."/>
            <person name="Riano-Pachon D.M."/>
            <person name="Robert V."/>
            <person name="Roehrig J."/>
            <person name="Ruller R."/>
            <person name="Salamov A."/>
            <person name="Salih N.S."/>
            <person name="Samson R.A."/>
            <person name="Sandor E."/>
            <person name="Sanguinetti M."/>
            <person name="Schuetze T."/>
            <person name="Sepcic K."/>
            <person name="Shelest E."/>
            <person name="Sherlock G."/>
            <person name="Sophianopoulou V."/>
            <person name="Squina F.M."/>
            <person name="Sun H."/>
            <person name="Susca A."/>
            <person name="Todd R.B."/>
            <person name="Tsang A."/>
            <person name="Unkles S.E."/>
            <person name="van de Wiele N."/>
            <person name="van Rossen-Uffink D."/>
            <person name="Oliveira J.V."/>
            <person name="Vesth T.C."/>
            <person name="Visser J."/>
            <person name="Yu J.-H."/>
            <person name="Zhou M."/>
            <person name="Andersen M.R."/>
            <person name="Archer D.B."/>
            <person name="Baker S.E."/>
            <person name="Benoit I."/>
            <person name="Brakhage A.A."/>
            <person name="Braus G.H."/>
            <person name="Fischer R."/>
            <person name="Frisvad J.C."/>
            <person name="Goldman G.H."/>
            <person name="Houbraken J."/>
            <person name="Oakley B."/>
            <person name="Pocsi I."/>
            <person name="Scazzocchio C."/>
            <person name="Seiboth B."/>
            <person name="vanKuyk P.A."/>
            <person name="Wortman J."/>
            <person name="Dyer P.S."/>
            <person name="Grigoriev I.V."/>
        </authorList>
    </citation>
    <scope>NUCLEOTIDE SEQUENCE [LARGE SCALE GENOMIC DNA]</scope>
    <source>
        <strain>ATCC 16872 / CBS 172.66 / WB 5094</strain>
    </source>
</reference>
<reference key="2">
    <citation type="journal article" date="2019" name="Angew. Chem. Int. Ed.">
        <title>The biosynthesis of norsesquiterpene aculenes requires three cytochrome P450 enzymes to catalyze a stepwise demethylation process.</title>
        <authorList>
            <person name="Lee C.F."/>
            <person name="Chen L.X."/>
            <person name="Chiang C.Y."/>
            <person name="Lai C.Y."/>
            <person name="Lin H.C."/>
        </authorList>
    </citation>
    <scope>FUNCTION</scope>
    <scope>DISRUPTION PHENOTYPE</scope>
    <scope>CATALYTIC ACTIVITY</scope>
    <scope>PATHWAY</scope>
</reference>
<organism>
    <name type="scientific">Aspergillus aculeatus (strain ATCC 16872 / CBS 172.66 / WB 5094)</name>
    <dbReference type="NCBI Taxonomy" id="690307"/>
    <lineage>
        <taxon>Eukaryota</taxon>
        <taxon>Fungi</taxon>
        <taxon>Dikarya</taxon>
        <taxon>Ascomycota</taxon>
        <taxon>Pezizomycotina</taxon>
        <taxon>Eurotiomycetes</taxon>
        <taxon>Eurotiomycetidae</taxon>
        <taxon>Eurotiales</taxon>
        <taxon>Aspergillaceae</taxon>
        <taxon>Aspergillus</taxon>
        <taxon>Aspergillus subgen. Circumdati</taxon>
    </lineage>
</organism>
<evidence type="ECO:0000250" key="1">
    <source>
        <dbReference type="UniProtKB" id="P04798"/>
    </source>
</evidence>
<evidence type="ECO:0000255" key="2"/>
<evidence type="ECO:0000255" key="3">
    <source>
        <dbReference type="PROSITE-ProRule" id="PRU00498"/>
    </source>
</evidence>
<evidence type="ECO:0000269" key="4">
    <source>
    </source>
</evidence>
<evidence type="ECO:0000303" key="5">
    <source>
    </source>
</evidence>
<evidence type="ECO:0000305" key="6"/>
<comment type="function">
    <text evidence="4">Cytochrome P450 monooxygenase; part of the gene cluster that mediates the biosynthesis of aculenes, a unique type of norsesquiterpenes that contain a nordaucane skeleton linked to an L-proline moiety and are of mixed biosynthetic origin (PubMed:31618514). The pathway begins with the synthesis of dauca-4,7-diene by the terpene cyclase aneC using farnesyl pyrophosphate (FPP) as substrate (PubMed:31618514). The cytochrome P450 monooxygenase aneF then performs the initial oxidation at C-12 of dauca-4,7-diene to yield asperaculane D (PubMed:31618514). Asperaculane D is substrate of the cytochrome P450 monooxygenase aneD for C-10 hydroxylation to yield asperaculane E (PubMed:31618514). The cytochrome P450 monooxygenase aneG then converts asperaculane E into aculene D via C-2 oxidation (PubMed:31618514). The monomodular nonribosomal peptide synthtase aneB adenylates L-proline and the thiohydrolase aneE transfers this activated L-proline derivative to aculenes D and C to produce respectively aculenes B and A (PubMed:31618514). The dioxygenase aneA converts aculene D into aculene C, and aculene B into aculene A by introducing the 5,6-alkene moiety (PubMed:31618514). Asperculanes A, B, C and F, as well as 14-prolyl asperculane C, might be shunt products of the pathway (PubMed:31618514).</text>
</comment>
<comment type="catalytic activity">
    <reaction evidence="4">
        <text>asperaculane D + reduced [NADPH--hemoprotein reductase] + O2 = asperaculane E + oxidized [NADPH--hemoprotein reductase] + H2O + H(+)</text>
        <dbReference type="Rhea" id="RHEA:65080"/>
        <dbReference type="Rhea" id="RHEA-COMP:11964"/>
        <dbReference type="Rhea" id="RHEA-COMP:11965"/>
        <dbReference type="ChEBI" id="CHEBI:15377"/>
        <dbReference type="ChEBI" id="CHEBI:15378"/>
        <dbReference type="ChEBI" id="CHEBI:15379"/>
        <dbReference type="ChEBI" id="CHEBI:57618"/>
        <dbReference type="ChEBI" id="CHEBI:58210"/>
        <dbReference type="ChEBI" id="CHEBI:155907"/>
        <dbReference type="ChEBI" id="CHEBI:155909"/>
    </reaction>
    <physiologicalReaction direction="left-to-right" evidence="4">
        <dbReference type="Rhea" id="RHEA:65081"/>
    </physiologicalReaction>
</comment>
<comment type="cofactor">
    <cofactor evidence="1">
        <name>heme</name>
        <dbReference type="ChEBI" id="CHEBI:30413"/>
    </cofactor>
</comment>
<comment type="pathway">
    <text evidence="4">Secondary metabolite biosynthesis.</text>
</comment>
<comment type="subcellular location">
    <subcellularLocation>
        <location evidence="2">Membrane</location>
        <topology evidence="2">Single-pass membrane protein</topology>
    </subcellularLocation>
</comment>
<comment type="disruption phenotype">
    <text evidence="4">Abolishes the formation of aculene A and accumulates asperculane C as a major product and 14-prolyl asperculane C as a minor product.</text>
</comment>
<comment type="similarity">
    <text evidence="6">Belongs to the cytochrome P450 family.</text>
</comment>
<dbReference type="EC" id="1.-.-.-" evidence="4"/>
<dbReference type="EMBL" id="KV878977">
    <property type="protein sequence ID" value="OJJ99915.1"/>
    <property type="molecule type" value="Genomic_DNA"/>
</dbReference>
<dbReference type="RefSeq" id="XP_020056255.1">
    <property type="nucleotide sequence ID" value="XM_020203589.1"/>
</dbReference>
<dbReference type="SMR" id="A0A1L9WUS5"/>
<dbReference type="STRING" id="690307.A0A1L9WUS5"/>
<dbReference type="GlyCosmos" id="A0A1L9WUS5">
    <property type="glycosylation" value="3 sites, No reported glycans"/>
</dbReference>
<dbReference type="GeneID" id="30977403"/>
<dbReference type="VEuPathDB" id="FungiDB:ASPACDRAFT_60732"/>
<dbReference type="OMA" id="YVNAFIA"/>
<dbReference type="OrthoDB" id="1470350at2759"/>
<dbReference type="Proteomes" id="UP000184546">
    <property type="component" value="Unassembled WGS sequence"/>
</dbReference>
<dbReference type="GO" id="GO:0016020">
    <property type="term" value="C:membrane"/>
    <property type="evidence" value="ECO:0007669"/>
    <property type="project" value="UniProtKB-SubCell"/>
</dbReference>
<dbReference type="GO" id="GO:0020037">
    <property type="term" value="F:heme binding"/>
    <property type="evidence" value="ECO:0007669"/>
    <property type="project" value="InterPro"/>
</dbReference>
<dbReference type="GO" id="GO:0005506">
    <property type="term" value="F:iron ion binding"/>
    <property type="evidence" value="ECO:0007669"/>
    <property type="project" value="InterPro"/>
</dbReference>
<dbReference type="GO" id="GO:0004497">
    <property type="term" value="F:monooxygenase activity"/>
    <property type="evidence" value="ECO:0007669"/>
    <property type="project" value="UniProtKB-KW"/>
</dbReference>
<dbReference type="GO" id="GO:0016705">
    <property type="term" value="F:oxidoreductase activity, acting on paired donors, with incorporation or reduction of molecular oxygen"/>
    <property type="evidence" value="ECO:0007669"/>
    <property type="project" value="InterPro"/>
</dbReference>
<dbReference type="CDD" id="cd11065">
    <property type="entry name" value="CYP64-like"/>
    <property type="match status" value="1"/>
</dbReference>
<dbReference type="Gene3D" id="1.10.630.10">
    <property type="entry name" value="Cytochrome P450"/>
    <property type="match status" value="1"/>
</dbReference>
<dbReference type="InterPro" id="IPR001128">
    <property type="entry name" value="Cyt_P450"/>
</dbReference>
<dbReference type="InterPro" id="IPR017972">
    <property type="entry name" value="Cyt_P450_CS"/>
</dbReference>
<dbReference type="InterPro" id="IPR002401">
    <property type="entry name" value="Cyt_P450_E_grp-I"/>
</dbReference>
<dbReference type="InterPro" id="IPR036396">
    <property type="entry name" value="Cyt_P450_sf"/>
</dbReference>
<dbReference type="InterPro" id="IPR050364">
    <property type="entry name" value="Cytochrome_P450_fung"/>
</dbReference>
<dbReference type="PANTHER" id="PTHR46300:SF1">
    <property type="entry name" value="P450, PUTATIVE (EUROFUNG)-RELATED"/>
    <property type="match status" value="1"/>
</dbReference>
<dbReference type="PANTHER" id="PTHR46300">
    <property type="entry name" value="P450, PUTATIVE (EUROFUNG)-RELATED-RELATED"/>
    <property type="match status" value="1"/>
</dbReference>
<dbReference type="Pfam" id="PF00067">
    <property type="entry name" value="p450"/>
    <property type="match status" value="1"/>
</dbReference>
<dbReference type="PRINTS" id="PR00463">
    <property type="entry name" value="EP450I"/>
</dbReference>
<dbReference type="PRINTS" id="PR00385">
    <property type="entry name" value="P450"/>
</dbReference>
<dbReference type="SUPFAM" id="SSF48264">
    <property type="entry name" value="Cytochrome P450"/>
    <property type="match status" value="1"/>
</dbReference>
<dbReference type="PROSITE" id="PS00086">
    <property type="entry name" value="CYTOCHROME_P450"/>
    <property type="match status" value="1"/>
</dbReference>
<keyword id="KW-0325">Glycoprotein</keyword>
<keyword id="KW-0349">Heme</keyword>
<keyword id="KW-0408">Iron</keyword>
<keyword id="KW-0472">Membrane</keyword>
<keyword id="KW-0479">Metal-binding</keyword>
<keyword id="KW-0503">Monooxygenase</keyword>
<keyword id="KW-0560">Oxidoreductase</keyword>
<keyword id="KW-1185">Reference proteome</keyword>
<keyword id="KW-0812">Transmembrane</keyword>
<keyword id="KW-1133">Transmembrane helix</keyword>
<proteinExistence type="evidence at protein level"/>
<accession>A0A1L9WUS5</accession>